<feature type="chain" id="PRO_0000128255" description="Pantothenate synthetase">
    <location>
        <begin position="1"/>
        <end position="283"/>
    </location>
</feature>
<feature type="active site" description="Proton donor" evidence="1">
    <location>
        <position position="37"/>
    </location>
</feature>
<feature type="binding site" evidence="1">
    <location>
        <begin position="30"/>
        <end position="37"/>
    </location>
    <ligand>
        <name>ATP</name>
        <dbReference type="ChEBI" id="CHEBI:30616"/>
    </ligand>
</feature>
<feature type="binding site" evidence="1">
    <location>
        <position position="61"/>
    </location>
    <ligand>
        <name>(R)-pantoate</name>
        <dbReference type="ChEBI" id="CHEBI:15980"/>
    </ligand>
</feature>
<feature type="binding site" evidence="1">
    <location>
        <position position="61"/>
    </location>
    <ligand>
        <name>beta-alanine</name>
        <dbReference type="ChEBI" id="CHEBI:57966"/>
    </ligand>
</feature>
<feature type="binding site" evidence="1">
    <location>
        <begin position="149"/>
        <end position="152"/>
    </location>
    <ligand>
        <name>ATP</name>
        <dbReference type="ChEBI" id="CHEBI:30616"/>
    </ligand>
</feature>
<feature type="binding site" evidence="1">
    <location>
        <position position="155"/>
    </location>
    <ligand>
        <name>(R)-pantoate</name>
        <dbReference type="ChEBI" id="CHEBI:15980"/>
    </ligand>
</feature>
<feature type="binding site" evidence="1">
    <location>
        <position position="178"/>
    </location>
    <ligand>
        <name>ATP</name>
        <dbReference type="ChEBI" id="CHEBI:30616"/>
    </ligand>
</feature>
<feature type="binding site" evidence="1">
    <location>
        <begin position="186"/>
        <end position="189"/>
    </location>
    <ligand>
        <name>ATP</name>
        <dbReference type="ChEBI" id="CHEBI:30616"/>
    </ligand>
</feature>
<reference key="1">
    <citation type="journal article" date="2009" name="Genome Biol.">
        <title>Genomic and genetic analyses of diversity and plant interactions of Pseudomonas fluorescens.</title>
        <authorList>
            <person name="Silby M.W."/>
            <person name="Cerdeno-Tarraga A.M."/>
            <person name="Vernikos G.S."/>
            <person name="Giddens S.R."/>
            <person name="Jackson R.W."/>
            <person name="Preston G.M."/>
            <person name="Zhang X.-X."/>
            <person name="Moon C.D."/>
            <person name="Gehrig S.M."/>
            <person name="Godfrey S.A.C."/>
            <person name="Knight C.G."/>
            <person name="Malone J.G."/>
            <person name="Robinson Z."/>
            <person name="Spiers A.J."/>
            <person name="Harris S."/>
            <person name="Challis G.L."/>
            <person name="Yaxley A.M."/>
            <person name="Harris D."/>
            <person name="Seeger K."/>
            <person name="Murphy L."/>
            <person name="Rutter S."/>
            <person name="Squares R."/>
            <person name="Quail M.A."/>
            <person name="Saunders E."/>
            <person name="Mavromatis K."/>
            <person name="Brettin T.S."/>
            <person name="Bentley S.D."/>
            <person name="Hothersall J."/>
            <person name="Stephens E."/>
            <person name="Thomas C.M."/>
            <person name="Parkhill J."/>
            <person name="Levy S.B."/>
            <person name="Rainey P.B."/>
            <person name="Thomson N.R."/>
        </authorList>
    </citation>
    <scope>NUCLEOTIDE SEQUENCE [LARGE SCALE GENOMIC DNA]</scope>
    <source>
        <strain>SBW25</strain>
    </source>
</reference>
<reference key="2">
    <citation type="journal article" date="1999" name="Environ. Microbiol.">
        <title>Adaptation of Pseudomonas fluorescens to the plant rhizosphere.</title>
        <authorList>
            <person name="Rainey P.B."/>
        </authorList>
    </citation>
    <scope>NUCLEOTIDE SEQUENCE [GENOMIC DNA] OF 1-61</scope>
</reference>
<accession>Q9ZEP7</accession>
<accession>C3K248</accession>
<proteinExistence type="inferred from homology"/>
<comment type="function">
    <text evidence="1">Catalyzes the condensation of pantoate with beta-alanine in an ATP-dependent reaction via a pantoyl-adenylate intermediate.</text>
</comment>
<comment type="catalytic activity">
    <reaction evidence="1">
        <text>(R)-pantoate + beta-alanine + ATP = (R)-pantothenate + AMP + diphosphate + H(+)</text>
        <dbReference type="Rhea" id="RHEA:10912"/>
        <dbReference type="ChEBI" id="CHEBI:15378"/>
        <dbReference type="ChEBI" id="CHEBI:15980"/>
        <dbReference type="ChEBI" id="CHEBI:29032"/>
        <dbReference type="ChEBI" id="CHEBI:30616"/>
        <dbReference type="ChEBI" id="CHEBI:33019"/>
        <dbReference type="ChEBI" id="CHEBI:57966"/>
        <dbReference type="ChEBI" id="CHEBI:456215"/>
        <dbReference type="EC" id="6.3.2.1"/>
    </reaction>
</comment>
<comment type="pathway">
    <text evidence="1">Cofactor biosynthesis; (R)-pantothenate biosynthesis; (R)-pantothenate from (R)-pantoate and beta-alanine: step 1/1.</text>
</comment>
<comment type="subunit">
    <text evidence="1">Homodimer.</text>
</comment>
<comment type="subcellular location">
    <subcellularLocation>
        <location evidence="1">Cytoplasm</location>
    </subcellularLocation>
</comment>
<comment type="miscellaneous">
    <text evidence="1">The reaction proceeds by a bi uni uni bi ping pong mechanism.</text>
</comment>
<comment type="similarity">
    <text evidence="1">Belongs to the pantothenate synthetase family.</text>
</comment>
<protein>
    <recommendedName>
        <fullName evidence="1">Pantothenate synthetase</fullName>
        <shortName evidence="1">PS</shortName>
        <ecNumber evidence="1">6.3.2.1</ecNumber>
    </recommendedName>
    <alternativeName>
        <fullName evidence="1">Pantoate--beta-alanine ligase</fullName>
    </alternativeName>
    <alternativeName>
        <fullName evidence="1">Pantoate-activating enzyme</fullName>
    </alternativeName>
</protein>
<organism>
    <name type="scientific">Pseudomonas fluorescens (strain SBW25)</name>
    <dbReference type="NCBI Taxonomy" id="216595"/>
    <lineage>
        <taxon>Bacteria</taxon>
        <taxon>Pseudomonadati</taxon>
        <taxon>Pseudomonadota</taxon>
        <taxon>Gammaproteobacteria</taxon>
        <taxon>Pseudomonadales</taxon>
        <taxon>Pseudomonadaceae</taxon>
        <taxon>Pseudomonas</taxon>
    </lineage>
</organism>
<keyword id="KW-0067">ATP-binding</keyword>
<keyword id="KW-0963">Cytoplasm</keyword>
<keyword id="KW-0436">Ligase</keyword>
<keyword id="KW-0547">Nucleotide-binding</keyword>
<keyword id="KW-0566">Pantothenate biosynthesis</keyword>
<evidence type="ECO:0000255" key="1">
    <source>
        <dbReference type="HAMAP-Rule" id="MF_00158"/>
    </source>
</evidence>
<gene>
    <name evidence="1" type="primary">panC</name>
    <name type="ordered locus">PFLU_5242</name>
</gene>
<sequence>MNTVKTVRELRAAVTHARSAGKRIGFVPTMGNLHSGHATLVTKAAQQADFVVASIFVNPLQFGAGEDLDKYPRTLAADQEKLLQAGCNLLFAPTVEEMYPGGMTGQTRVSVPQLSEGLCGASRPGHFEGVATVVSKLFNMVQPDMAVFGQKDYQQLAVIRAMVHDLNMPIQIIGEPTVRADDGLALSSRNGYLTDEQRAIAPVLYRSLSQIGAAIKAGDHDFAKLRAEQVQQIEAAGLRLDYFEVRQGVHLRPATPEDRDIVILVAAYLGATRLIDNLHLTLD</sequence>
<dbReference type="EC" id="6.3.2.1" evidence="1"/>
<dbReference type="EMBL" id="AM181176">
    <property type="protein sequence ID" value="CAY52333.1"/>
    <property type="molecule type" value="Genomic_DNA"/>
</dbReference>
<dbReference type="EMBL" id="AJ130846">
    <property type="protein sequence ID" value="CAA10223.1"/>
    <property type="molecule type" value="Genomic_DNA"/>
</dbReference>
<dbReference type="RefSeq" id="WP_015885908.1">
    <property type="nucleotide sequence ID" value="NC_012660.1"/>
</dbReference>
<dbReference type="SMR" id="Q9ZEP7"/>
<dbReference type="STRING" id="294.SRM1_04858"/>
<dbReference type="PATRIC" id="fig|216595.4.peg.5374"/>
<dbReference type="eggNOG" id="COG0414">
    <property type="taxonomic scope" value="Bacteria"/>
</dbReference>
<dbReference type="HOGENOM" id="CLU_047148_0_0_6"/>
<dbReference type="OrthoDB" id="9773087at2"/>
<dbReference type="UniPathway" id="UPA00028">
    <property type="reaction ID" value="UER00005"/>
</dbReference>
<dbReference type="GO" id="GO:0005829">
    <property type="term" value="C:cytosol"/>
    <property type="evidence" value="ECO:0007669"/>
    <property type="project" value="TreeGrafter"/>
</dbReference>
<dbReference type="GO" id="GO:0005524">
    <property type="term" value="F:ATP binding"/>
    <property type="evidence" value="ECO:0007669"/>
    <property type="project" value="UniProtKB-KW"/>
</dbReference>
<dbReference type="GO" id="GO:0004592">
    <property type="term" value="F:pantoate-beta-alanine ligase activity"/>
    <property type="evidence" value="ECO:0007669"/>
    <property type="project" value="UniProtKB-UniRule"/>
</dbReference>
<dbReference type="GO" id="GO:0015940">
    <property type="term" value="P:pantothenate biosynthetic process"/>
    <property type="evidence" value="ECO:0007669"/>
    <property type="project" value="UniProtKB-UniRule"/>
</dbReference>
<dbReference type="CDD" id="cd00560">
    <property type="entry name" value="PanC"/>
    <property type="match status" value="1"/>
</dbReference>
<dbReference type="FunFam" id="3.30.1300.10:FF:000001">
    <property type="entry name" value="Pantothenate synthetase"/>
    <property type="match status" value="1"/>
</dbReference>
<dbReference type="FunFam" id="3.40.50.620:FF:000013">
    <property type="entry name" value="Pantothenate synthetase"/>
    <property type="match status" value="1"/>
</dbReference>
<dbReference type="Gene3D" id="3.40.50.620">
    <property type="entry name" value="HUPs"/>
    <property type="match status" value="1"/>
</dbReference>
<dbReference type="Gene3D" id="3.30.1300.10">
    <property type="entry name" value="Pantoate-beta-alanine ligase, C-terminal domain"/>
    <property type="match status" value="1"/>
</dbReference>
<dbReference type="HAMAP" id="MF_00158">
    <property type="entry name" value="PanC"/>
    <property type="match status" value="1"/>
</dbReference>
<dbReference type="InterPro" id="IPR004821">
    <property type="entry name" value="Cyt_trans-like"/>
</dbReference>
<dbReference type="InterPro" id="IPR003721">
    <property type="entry name" value="Pantoate_ligase"/>
</dbReference>
<dbReference type="InterPro" id="IPR042176">
    <property type="entry name" value="Pantoate_ligase_C"/>
</dbReference>
<dbReference type="InterPro" id="IPR014729">
    <property type="entry name" value="Rossmann-like_a/b/a_fold"/>
</dbReference>
<dbReference type="NCBIfam" id="TIGR00125">
    <property type="entry name" value="cyt_tran_rel"/>
    <property type="match status" value="1"/>
</dbReference>
<dbReference type="NCBIfam" id="TIGR00018">
    <property type="entry name" value="panC"/>
    <property type="match status" value="1"/>
</dbReference>
<dbReference type="PANTHER" id="PTHR21299">
    <property type="entry name" value="CYTIDYLATE KINASE/PANTOATE-BETA-ALANINE LIGASE"/>
    <property type="match status" value="1"/>
</dbReference>
<dbReference type="PANTHER" id="PTHR21299:SF1">
    <property type="entry name" value="PANTOATE--BETA-ALANINE LIGASE"/>
    <property type="match status" value="1"/>
</dbReference>
<dbReference type="Pfam" id="PF02569">
    <property type="entry name" value="Pantoate_ligase"/>
    <property type="match status" value="1"/>
</dbReference>
<dbReference type="SUPFAM" id="SSF52374">
    <property type="entry name" value="Nucleotidylyl transferase"/>
    <property type="match status" value="1"/>
</dbReference>
<name>PANC_PSEFS</name>